<protein>
    <recommendedName>
        <fullName evidence="1">Hydrogenase maturation factor HypB</fullName>
    </recommendedName>
</protein>
<accession>Q43949</accession>
<keyword id="KW-0342">GTP-binding</keyword>
<keyword id="KW-0378">Hydrolase</keyword>
<keyword id="KW-0479">Metal-binding</keyword>
<keyword id="KW-0533">Nickel</keyword>
<keyword id="KW-0547">Nucleotide-binding</keyword>
<keyword id="KW-0862">Zinc</keyword>
<name>HYPB_AZOCH</name>
<comment type="function">
    <text evidence="1">Involved in the maturation of [NiFe] hydrogenases. Required for nickel insertion into the metal center of the hydrogenase. Exhibits a low intrinsic GTPase activity, which is essential for nickel insertion.</text>
</comment>
<comment type="similarity">
    <text evidence="2">Belongs to the SIMIBI class G3E GTPase family. HypB/HupM subfamily.</text>
</comment>
<gene>
    <name type="primary">hypB</name>
    <name type="synonym">hupB</name>
</gene>
<sequence>MCTVCGCAEGETRIEGEHHHHGYDHGHHHHDHAFVRRPAPAEAAPLVVEGLNLHFGQGPARAHAPGLSQSRMVQIEQDILGKNDRYAAENRARFEALSLFVLNLVSSPGSGKTTLLTKTIELLGRHRPLAVIEGDQQTDHDAARIRATGVPAVQVNTGKGCHLDAHMVGRAFEQLEGLDGGLLFIENVGNLVCPAAFDLGEAHKVAILSVTEGEDKPLKYPDMFHAADLMLLNKTDLLPHLDFDVEACIAYARRVNPDIKVIRVSARSGEGMGEWLAWIERQRGARLRARIDALRAQAQALEALL</sequence>
<organism>
    <name type="scientific">Azotobacter chroococcum mcd 1</name>
    <dbReference type="NCBI Taxonomy" id="355"/>
    <lineage>
        <taxon>Bacteria</taxon>
        <taxon>Pseudomonadati</taxon>
        <taxon>Pseudomonadota</taxon>
        <taxon>Gammaproteobacteria</taxon>
        <taxon>Pseudomonadales</taxon>
        <taxon>Pseudomonadaceae</taxon>
        <taxon>Azotobacter</taxon>
    </lineage>
</organism>
<proteinExistence type="inferred from homology"/>
<feature type="chain" id="PRO_0000201435" description="Hydrogenase maturation factor HypB">
    <location>
        <begin position="1"/>
        <end position="305"/>
    </location>
</feature>
<feature type="region of interest" description="G-domain" evidence="1">
    <location>
        <begin position="101"/>
        <end position="262"/>
    </location>
</feature>
<feature type="binding site" evidence="1">
    <location>
        <position position="2"/>
    </location>
    <ligand>
        <name>Ni(2+)</name>
        <dbReference type="ChEBI" id="CHEBI:49786"/>
        <label>1</label>
    </ligand>
</feature>
<feature type="binding site" evidence="1">
    <location>
        <position position="5"/>
    </location>
    <ligand>
        <name>Ni(2+)</name>
        <dbReference type="ChEBI" id="CHEBI:49786"/>
        <label>1</label>
    </ligand>
</feature>
<feature type="binding site" evidence="1">
    <location>
        <position position="7"/>
    </location>
    <ligand>
        <name>Ni(2+)</name>
        <dbReference type="ChEBI" id="CHEBI:49786"/>
        <label>1</label>
    </ligand>
</feature>
<feature type="binding site" evidence="1">
    <location>
        <position position="161"/>
    </location>
    <ligand>
        <name>Ni(2+)</name>
        <dbReference type="ChEBI" id="CHEBI:49786"/>
        <label>2</label>
    </ligand>
</feature>
<feature type="binding site" evidence="1">
    <location>
        <position position="161"/>
    </location>
    <ligand>
        <name>Zn(2+)</name>
        <dbReference type="ChEBI" id="CHEBI:29105"/>
    </ligand>
</feature>
<feature type="binding site" evidence="1">
    <location>
        <position position="162"/>
    </location>
    <ligand>
        <name>Ni(2+)</name>
        <dbReference type="ChEBI" id="CHEBI:49786"/>
        <label>2</label>
    </ligand>
</feature>
<feature type="binding site" evidence="1">
    <location>
        <position position="162"/>
    </location>
    <ligand>
        <name>Zn(2+)</name>
        <dbReference type="ChEBI" id="CHEBI:29105"/>
    </ligand>
</feature>
<feature type="binding site" evidence="1">
    <location>
        <position position="193"/>
    </location>
    <ligand>
        <name>Ni(2+)</name>
        <dbReference type="ChEBI" id="CHEBI:49786"/>
        <label>2</label>
    </ligand>
</feature>
<feature type="binding site" evidence="1">
    <location>
        <position position="193"/>
    </location>
    <ligand>
        <name>Zn(2+)</name>
        <dbReference type="ChEBI" id="CHEBI:29105"/>
    </ligand>
</feature>
<reference key="1">
    <citation type="journal article" date="1993" name="Gene">
        <title>The Azotobacter chroococcum hydrogenase gene cluster: sequences and genetic analysis of four accessory genes, hupA, hupB, hupY and hupC.</title>
        <authorList>
            <person name="Tibelius K.H."/>
            <person name="Du L."/>
            <person name="Tito D."/>
            <person name="Stejskal F."/>
        </authorList>
    </citation>
    <scope>NUCLEOTIDE SEQUENCE [GENOMIC DNA]</scope>
</reference>
<reference key="2">
    <citation type="journal article" date="1993" name="Gene">
        <authorList>
            <person name="Tibelius K.H."/>
            <person name="Du L."/>
            <person name="Tito D."/>
            <person name="Stejskal F."/>
        </authorList>
    </citation>
    <scope>ERRATUM OF PUBMED:8486288</scope>
</reference>
<evidence type="ECO:0000250" key="1">
    <source>
        <dbReference type="UniProtKB" id="P0AAN3"/>
    </source>
</evidence>
<evidence type="ECO:0000305" key="2"/>
<dbReference type="EMBL" id="L00674">
    <property type="protein sequence ID" value="AAA22133.1"/>
    <property type="molecule type" value="Genomic_DNA"/>
</dbReference>
<dbReference type="PIR" id="JN0647">
    <property type="entry name" value="JN0647"/>
</dbReference>
<dbReference type="SMR" id="Q43949"/>
<dbReference type="GO" id="GO:0016887">
    <property type="term" value="F:ATP hydrolysis activity"/>
    <property type="evidence" value="ECO:0007669"/>
    <property type="project" value="InterPro"/>
</dbReference>
<dbReference type="GO" id="GO:0005525">
    <property type="term" value="F:GTP binding"/>
    <property type="evidence" value="ECO:0007669"/>
    <property type="project" value="UniProtKB-KW"/>
</dbReference>
<dbReference type="GO" id="GO:0003924">
    <property type="term" value="F:GTPase activity"/>
    <property type="evidence" value="ECO:0007669"/>
    <property type="project" value="InterPro"/>
</dbReference>
<dbReference type="GO" id="GO:0016151">
    <property type="term" value="F:nickel cation binding"/>
    <property type="evidence" value="ECO:0007669"/>
    <property type="project" value="InterPro"/>
</dbReference>
<dbReference type="GO" id="GO:0008270">
    <property type="term" value="F:zinc ion binding"/>
    <property type="evidence" value="ECO:0007669"/>
    <property type="project" value="TreeGrafter"/>
</dbReference>
<dbReference type="GO" id="GO:0051604">
    <property type="term" value="P:protein maturation"/>
    <property type="evidence" value="ECO:0007669"/>
    <property type="project" value="InterPro"/>
</dbReference>
<dbReference type="CDD" id="cd05390">
    <property type="entry name" value="HypB"/>
    <property type="match status" value="1"/>
</dbReference>
<dbReference type="Gene3D" id="3.40.50.300">
    <property type="entry name" value="P-loop containing nucleotide triphosphate hydrolases"/>
    <property type="match status" value="1"/>
</dbReference>
<dbReference type="InterPro" id="IPR003593">
    <property type="entry name" value="AAA+_ATPase"/>
</dbReference>
<dbReference type="InterPro" id="IPR003495">
    <property type="entry name" value="CobW/HypB/UreG_nucleotide-bd"/>
</dbReference>
<dbReference type="InterPro" id="IPR004392">
    <property type="entry name" value="Hyd_mat_HypB"/>
</dbReference>
<dbReference type="InterPro" id="IPR027417">
    <property type="entry name" value="P-loop_NTPase"/>
</dbReference>
<dbReference type="NCBIfam" id="TIGR00073">
    <property type="entry name" value="hypB"/>
    <property type="match status" value="1"/>
</dbReference>
<dbReference type="NCBIfam" id="NF007775">
    <property type="entry name" value="PRK10463.1"/>
    <property type="match status" value="1"/>
</dbReference>
<dbReference type="PANTHER" id="PTHR30134:SF2">
    <property type="entry name" value="HYDROGENASE MATURATION FACTOR HYPB"/>
    <property type="match status" value="1"/>
</dbReference>
<dbReference type="PANTHER" id="PTHR30134">
    <property type="entry name" value="HYDROGENASE PROTEIN ASSEMBLY PROTEIN, NICKEL CHAPERONE"/>
    <property type="match status" value="1"/>
</dbReference>
<dbReference type="Pfam" id="PF02492">
    <property type="entry name" value="cobW"/>
    <property type="match status" value="1"/>
</dbReference>
<dbReference type="SMART" id="SM00382">
    <property type="entry name" value="AAA"/>
    <property type="match status" value="1"/>
</dbReference>
<dbReference type="SUPFAM" id="SSF52540">
    <property type="entry name" value="P-loop containing nucleoside triphosphate hydrolases"/>
    <property type="match status" value="1"/>
</dbReference>